<accession>Q1JHM1</accession>
<sequence>MLFNINEKGEPLVISFAPFLSPEAIKHLQENERCSDQSQKRTAQQIEAIYTSGQNILVSASAGSGKTFVMVERILDKILRGVSIDRLFISTFTVKAATELRERIENKLYSQIAQTTDFQMKVYLTEQLQSLCQADIGTMDAFAQKVVSRYGYSIGISSQFRIMQDKAEQDVLKQEVFSKLFNEFMNQKEAPVFRALVKNFSGNCKDTSAFRELVYTCYSFSQSTENPKIWLQENFLSAAKTYQRLEDIPDHDIELLLLAMQDTANQLRDVTDMEDYGQLTKAGSRSAKYTKHLTIIEKLSDWVRDFKCLYGKAGLDRLIRDVTGLIPSGNDVTVSKVKYPVFKTLHQKLKQFRHLETILMYQKDCFPLLEQLQDFVLAFSEAYLAVKIQESAFEFSDIAHFAIKILEENTDIRQSYQQHYHEVMVDEYQDNNHMQERLLTLLSNGHNRFMVGDIKQSIYRFRQADPQIFNQKFRDYQKKPEQGKVILLKENFRSQSEVLNVSNAVFSHLMDESVGDALYDEQHQLIAGSHAQTVPYLDRRAQLLLYNSDKDDGNAPSDSEGISFSEVTIVAKEIIKLHNDKGVPFEDITLLVSSRTRNDIISHTFNQYGIPIVTDGGQQNYLKSVEVMVMLDTLRTINNPRNDYALVALLRSPMFAFDEDDLARIALQKDNELDKDCLYDKIQRAVIGRGAHPELIHDTLLGKLNIFLKTLKSWRRYAKLGSLYDLIWKIFNDRFYFDFVASQAKAEQAQANLYALALRANQFEKSGYKGLYRFIKMIDKVLETQNDLADVEVAAPKQAVNLMTIHKSKGLQFPYVFILNCDKRFSMTDIHKSFILNRQHGIGIKYLADIKGLLGETTLNSVKVSMETLPYQLNKQELRLATLSEQMRLLYVAMTRAEKKVYFIGKASKSKSQDITDPKKLGKLLPLALREQLLTFQDWLLAIADIFSTEDLYFDVRFIEDSDLTQESVGRLQTPQLLNPDDLKDNRQSETIARALDMLEAVSQLNANYEAAIHLPTVRTPSQLKATYEPLLEPIGVDIIEKSSRSLSDFTLPHFSKKAKVEVSHIGSALHQLMQVLPLSKPINQQTLLDALRGIASNEEVKTALDLKKIESFFCDTSLGQFFQTYQKHLYREAPFAILKLDPISQEEYVLRGIIDAYFLFDDHIVLVDYKTDKYKQPIELKKRYQQQLELYAEALTQTYKLPVTKRYLVLMGGGNPEIVEV</sequence>
<feature type="chain" id="PRO_0000379344" description="ATP-dependent helicase/nuclease subunit A">
    <location>
        <begin position="1"/>
        <end position="1222"/>
    </location>
</feature>
<feature type="domain" description="UvrD-like helicase ATP-binding" evidence="1">
    <location>
        <begin position="39"/>
        <end position="495"/>
    </location>
</feature>
<feature type="domain" description="UvrD-like helicase C-terminal" evidence="1">
    <location>
        <begin position="524"/>
        <end position="810"/>
    </location>
</feature>
<feature type="binding site" evidence="1">
    <location>
        <begin position="60"/>
        <end position="67"/>
    </location>
    <ligand>
        <name>ATP</name>
        <dbReference type="ChEBI" id="CHEBI:30616"/>
    </ligand>
</feature>
<comment type="function">
    <text evidence="1">The heterodimer acts as both an ATP-dependent DNA helicase and an ATP-dependent, dual-direction single-stranded exonuclease. Recognizes the chi site generating a DNA molecule suitable for the initiation of homologous recombination. The AddA nuclease domain is required for chi fragment generation; this subunit has the helicase and 3' -&gt; 5' nuclease activities.</text>
</comment>
<comment type="catalytic activity">
    <reaction evidence="1">
        <text>Couples ATP hydrolysis with the unwinding of duplex DNA by translocating in the 3'-5' direction.</text>
        <dbReference type="EC" id="5.6.2.4"/>
    </reaction>
</comment>
<comment type="catalytic activity">
    <reaction evidence="1">
        <text>ATP + H2O = ADP + phosphate + H(+)</text>
        <dbReference type="Rhea" id="RHEA:13065"/>
        <dbReference type="ChEBI" id="CHEBI:15377"/>
        <dbReference type="ChEBI" id="CHEBI:15378"/>
        <dbReference type="ChEBI" id="CHEBI:30616"/>
        <dbReference type="ChEBI" id="CHEBI:43474"/>
        <dbReference type="ChEBI" id="CHEBI:456216"/>
        <dbReference type="EC" id="5.6.2.4"/>
    </reaction>
</comment>
<comment type="cofactor">
    <cofactor evidence="1">
        <name>Mg(2+)</name>
        <dbReference type="ChEBI" id="CHEBI:18420"/>
    </cofactor>
</comment>
<comment type="subunit">
    <text evidence="1">Heterodimer of AddA and AddB/RexB.</text>
</comment>
<comment type="similarity">
    <text evidence="1">Belongs to the helicase family. AddA subfamily.</text>
</comment>
<protein>
    <recommendedName>
        <fullName evidence="1">ATP-dependent helicase/nuclease subunit A</fullName>
        <ecNumber evidence="1">3.1.-.-</ecNumber>
        <ecNumber evidence="1">5.6.2.4</ecNumber>
    </recommendedName>
    <alternativeName>
        <fullName evidence="1">ATP-dependent helicase/nuclease AddA</fullName>
    </alternativeName>
    <alternativeName>
        <fullName evidence="1">DNA 3'-5' helicase AddA</fullName>
    </alternativeName>
</protein>
<reference key="1">
    <citation type="journal article" date="2006" name="Proc. Natl. Acad. Sci. U.S.A.">
        <title>Molecular genetic anatomy of inter- and intraserotype variation in the human bacterial pathogen group A Streptococcus.</title>
        <authorList>
            <person name="Beres S.B."/>
            <person name="Richter E.W."/>
            <person name="Nagiec M.J."/>
            <person name="Sumby P."/>
            <person name="Porcella S.F."/>
            <person name="DeLeo F.R."/>
            <person name="Musser J.M."/>
        </authorList>
    </citation>
    <scope>NUCLEOTIDE SEQUENCE [LARGE SCALE GENOMIC DNA]</scope>
    <source>
        <strain>MGAS10270</strain>
    </source>
</reference>
<gene>
    <name evidence="1" type="primary">addA</name>
    <name type="synonym">rexA</name>
    <name type="ordered locus">MGAS10270_Spy0650</name>
</gene>
<organism>
    <name type="scientific">Streptococcus pyogenes serotype M2 (strain MGAS10270)</name>
    <dbReference type="NCBI Taxonomy" id="370552"/>
    <lineage>
        <taxon>Bacteria</taxon>
        <taxon>Bacillati</taxon>
        <taxon>Bacillota</taxon>
        <taxon>Bacilli</taxon>
        <taxon>Lactobacillales</taxon>
        <taxon>Streptococcaceae</taxon>
        <taxon>Streptococcus</taxon>
    </lineage>
</organism>
<name>ADDA_STRPD</name>
<keyword id="KW-0067">ATP-binding</keyword>
<keyword id="KW-0227">DNA damage</keyword>
<keyword id="KW-0234">DNA repair</keyword>
<keyword id="KW-0238">DNA-binding</keyword>
<keyword id="KW-0269">Exonuclease</keyword>
<keyword id="KW-0347">Helicase</keyword>
<keyword id="KW-0378">Hydrolase</keyword>
<keyword id="KW-0413">Isomerase</keyword>
<keyword id="KW-0540">Nuclease</keyword>
<keyword id="KW-0547">Nucleotide-binding</keyword>
<evidence type="ECO:0000255" key="1">
    <source>
        <dbReference type="HAMAP-Rule" id="MF_01451"/>
    </source>
</evidence>
<dbReference type="EC" id="3.1.-.-" evidence="1"/>
<dbReference type="EC" id="5.6.2.4" evidence="1"/>
<dbReference type="EMBL" id="CP000260">
    <property type="protein sequence ID" value="ABF33715.1"/>
    <property type="molecule type" value="Genomic_DNA"/>
</dbReference>
<dbReference type="SMR" id="Q1JHM1"/>
<dbReference type="KEGG" id="sph:MGAS10270_Spy0650"/>
<dbReference type="HOGENOM" id="CLU_001114_3_1_9"/>
<dbReference type="Proteomes" id="UP000002436">
    <property type="component" value="Chromosome"/>
</dbReference>
<dbReference type="GO" id="GO:0005829">
    <property type="term" value="C:cytosol"/>
    <property type="evidence" value="ECO:0007669"/>
    <property type="project" value="TreeGrafter"/>
</dbReference>
<dbReference type="GO" id="GO:0033202">
    <property type="term" value="C:DNA helicase complex"/>
    <property type="evidence" value="ECO:0007669"/>
    <property type="project" value="TreeGrafter"/>
</dbReference>
<dbReference type="GO" id="GO:0043138">
    <property type="term" value="F:3'-5' DNA helicase activity"/>
    <property type="evidence" value="ECO:0007669"/>
    <property type="project" value="UniProtKB-UniRule"/>
</dbReference>
<dbReference type="GO" id="GO:0008408">
    <property type="term" value="F:3'-5' exonuclease activity"/>
    <property type="evidence" value="ECO:0007669"/>
    <property type="project" value="UniProtKB-UniRule"/>
</dbReference>
<dbReference type="GO" id="GO:0005524">
    <property type="term" value="F:ATP binding"/>
    <property type="evidence" value="ECO:0007669"/>
    <property type="project" value="UniProtKB-UniRule"/>
</dbReference>
<dbReference type="GO" id="GO:0016887">
    <property type="term" value="F:ATP hydrolysis activity"/>
    <property type="evidence" value="ECO:0007669"/>
    <property type="project" value="RHEA"/>
</dbReference>
<dbReference type="GO" id="GO:0003690">
    <property type="term" value="F:double-stranded DNA binding"/>
    <property type="evidence" value="ECO:0007669"/>
    <property type="project" value="UniProtKB-UniRule"/>
</dbReference>
<dbReference type="GO" id="GO:0000724">
    <property type="term" value="P:double-strand break repair via homologous recombination"/>
    <property type="evidence" value="ECO:0007669"/>
    <property type="project" value="UniProtKB-UniRule"/>
</dbReference>
<dbReference type="CDD" id="cd17932">
    <property type="entry name" value="DEXQc_UvrD"/>
    <property type="match status" value="1"/>
</dbReference>
<dbReference type="Gene3D" id="3.90.320.10">
    <property type="match status" value="1"/>
</dbReference>
<dbReference type="Gene3D" id="3.40.50.300">
    <property type="entry name" value="P-loop containing nucleotide triphosphate hydrolases"/>
    <property type="match status" value="4"/>
</dbReference>
<dbReference type="Gene3D" id="1.10.486.10">
    <property type="entry name" value="PCRA, domain 4"/>
    <property type="match status" value="1"/>
</dbReference>
<dbReference type="HAMAP" id="MF_01451">
    <property type="entry name" value="AddA"/>
    <property type="match status" value="1"/>
</dbReference>
<dbReference type="InterPro" id="IPR014152">
    <property type="entry name" value="AddA"/>
</dbReference>
<dbReference type="InterPro" id="IPR014017">
    <property type="entry name" value="DNA_helicase_UvrD-like_C"/>
</dbReference>
<dbReference type="InterPro" id="IPR000212">
    <property type="entry name" value="DNA_helicase_UvrD/REP"/>
</dbReference>
<dbReference type="InterPro" id="IPR027417">
    <property type="entry name" value="P-loop_NTPase"/>
</dbReference>
<dbReference type="InterPro" id="IPR011604">
    <property type="entry name" value="PDDEXK-like_dom_sf"/>
</dbReference>
<dbReference type="InterPro" id="IPR038726">
    <property type="entry name" value="PDDEXK_AddAB-type"/>
</dbReference>
<dbReference type="InterPro" id="IPR011335">
    <property type="entry name" value="Restrct_endonuc-II-like"/>
</dbReference>
<dbReference type="InterPro" id="IPR014016">
    <property type="entry name" value="UvrD-like_ATP-bd"/>
</dbReference>
<dbReference type="NCBIfam" id="TIGR02785">
    <property type="entry name" value="addA_Gpos"/>
    <property type="match status" value="1"/>
</dbReference>
<dbReference type="PANTHER" id="PTHR11070:SF48">
    <property type="entry name" value="ATP-DEPENDENT HELICASE_NUCLEASE SUBUNIT A"/>
    <property type="match status" value="1"/>
</dbReference>
<dbReference type="PANTHER" id="PTHR11070">
    <property type="entry name" value="UVRD / RECB / PCRA DNA HELICASE FAMILY MEMBER"/>
    <property type="match status" value="1"/>
</dbReference>
<dbReference type="Pfam" id="PF12705">
    <property type="entry name" value="PDDEXK_1"/>
    <property type="match status" value="1"/>
</dbReference>
<dbReference type="Pfam" id="PF00580">
    <property type="entry name" value="UvrD-helicase"/>
    <property type="match status" value="1"/>
</dbReference>
<dbReference type="Pfam" id="PF13361">
    <property type="entry name" value="UvrD_C"/>
    <property type="match status" value="1"/>
</dbReference>
<dbReference type="SUPFAM" id="SSF52540">
    <property type="entry name" value="P-loop containing nucleoside triphosphate hydrolases"/>
    <property type="match status" value="1"/>
</dbReference>
<dbReference type="SUPFAM" id="SSF52980">
    <property type="entry name" value="Restriction endonuclease-like"/>
    <property type="match status" value="1"/>
</dbReference>
<dbReference type="PROSITE" id="PS51198">
    <property type="entry name" value="UVRD_HELICASE_ATP_BIND"/>
    <property type="match status" value="1"/>
</dbReference>
<dbReference type="PROSITE" id="PS51217">
    <property type="entry name" value="UVRD_HELICASE_CTER"/>
    <property type="match status" value="1"/>
</dbReference>
<proteinExistence type="inferred from homology"/>